<feature type="chain" id="PRO_1000101327" description="Glycine--tRNA ligase beta subunit">
    <location>
        <begin position="1"/>
        <end position="662"/>
    </location>
</feature>
<organism>
    <name type="scientific">Rickettsia akari (strain Hartford)</name>
    <dbReference type="NCBI Taxonomy" id="293614"/>
    <lineage>
        <taxon>Bacteria</taxon>
        <taxon>Pseudomonadati</taxon>
        <taxon>Pseudomonadota</taxon>
        <taxon>Alphaproteobacteria</taxon>
        <taxon>Rickettsiales</taxon>
        <taxon>Rickettsiaceae</taxon>
        <taxon>Rickettsieae</taxon>
        <taxon>Rickettsia</taxon>
        <taxon>spotted fever group</taxon>
    </lineage>
</organism>
<keyword id="KW-0030">Aminoacyl-tRNA synthetase</keyword>
<keyword id="KW-0067">ATP-binding</keyword>
<keyword id="KW-0963">Cytoplasm</keyword>
<keyword id="KW-0436">Ligase</keyword>
<keyword id="KW-0547">Nucleotide-binding</keyword>
<keyword id="KW-0648">Protein biosynthesis</keyword>
<reference key="1">
    <citation type="submission" date="2007-09" db="EMBL/GenBank/DDBJ databases">
        <title>Complete genome sequence of Rickettsia akari.</title>
        <authorList>
            <person name="Madan A."/>
            <person name="Fahey J."/>
            <person name="Helton E."/>
            <person name="Ketteman M."/>
            <person name="Madan A."/>
            <person name="Rodrigues S."/>
            <person name="Sanchez A."/>
            <person name="Whiting M."/>
            <person name="Dasch G."/>
            <person name="Eremeeva M."/>
        </authorList>
    </citation>
    <scope>NUCLEOTIDE SEQUENCE [LARGE SCALE GENOMIC DNA]</scope>
    <source>
        <strain>Hartford</strain>
    </source>
</reference>
<evidence type="ECO:0000255" key="1">
    <source>
        <dbReference type="HAMAP-Rule" id="MF_00255"/>
    </source>
</evidence>
<sequence length="662" mass="75145">MSELLLELFSEEIPAFMQKNAEEGYLNIFTQIFAESAIFAKVQVFVGPRRITLYATHLPKVTLPQEEEIKGPSIESPEAAINGFCSAHNVSKLELSTKLINNQLYYFFVKKTKEREIKEILPKIIIEAINKYSWAKSMFWGDYKIKWIRPLRNILCIFDGEVLPLQFGHLTANNITYGHRLTDNKKLEVTDFKDYRNKLLENNVVLERIKREEIIKTGLLELANSQNLNIKEDARLIEEVAGLSEFPVVLLGKIAQKFLELPKEVLIASMRTHQKYFCLFDKTGNFAPYFLFVSNGRFANAELVIQGNEKVLSARLSDALYFYKQDIAKTLESRLGKLEAVTFHAKLGNLREKIEHITDICNYIAPNNKDLITAAKLCKSDLVSEMVGEFPDLQGIMGYYYAKYEGLNEEIAAAIRDHYKPQGLSDNVASGNAALLALADKLDSLVGLMIAGEAPTGSGDPYALRRQALGIIRIILENKLELNLNDLIIFSLKLYGNSADKDLITSFFEERAKFYFKNKYDILLINAVLDLNLVDTQFKLETLKEFLIEDAGKQLLNAYKRASNIIGDQKITGLVDASLFSTQPEKDLFEVVQKISPQIIDSIADKDYKRALNLLSFLLTPITSFFDNVLVNDPDPKIAQNRLSLLQNICELLNKIAKFNRL</sequence>
<name>SYGB_RICAH</name>
<dbReference type="EC" id="6.1.1.14" evidence="1"/>
<dbReference type="EMBL" id="CP000847">
    <property type="protein sequence ID" value="ABV75539.1"/>
    <property type="molecule type" value="Genomic_DNA"/>
</dbReference>
<dbReference type="RefSeq" id="WP_012150168.1">
    <property type="nucleotide sequence ID" value="NC_009881.1"/>
</dbReference>
<dbReference type="SMR" id="A8GQ64"/>
<dbReference type="STRING" id="293614.A1C_06580"/>
<dbReference type="KEGG" id="rak:A1C_06580"/>
<dbReference type="eggNOG" id="COG0751">
    <property type="taxonomic scope" value="Bacteria"/>
</dbReference>
<dbReference type="HOGENOM" id="CLU_007220_2_1_5"/>
<dbReference type="Proteomes" id="UP000006830">
    <property type="component" value="Chromosome"/>
</dbReference>
<dbReference type="GO" id="GO:0005829">
    <property type="term" value="C:cytosol"/>
    <property type="evidence" value="ECO:0007669"/>
    <property type="project" value="TreeGrafter"/>
</dbReference>
<dbReference type="GO" id="GO:0004814">
    <property type="term" value="F:arginine-tRNA ligase activity"/>
    <property type="evidence" value="ECO:0007669"/>
    <property type="project" value="InterPro"/>
</dbReference>
<dbReference type="GO" id="GO:0005524">
    <property type="term" value="F:ATP binding"/>
    <property type="evidence" value="ECO:0007669"/>
    <property type="project" value="UniProtKB-UniRule"/>
</dbReference>
<dbReference type="GO" id="GO:0004820">
    <property type="term" value="F:glycine-tRNA ligase activity"/>
    <property type="evidence" value="ECO:0007669"/>
    <property type="project" value="UniProtKB-UniRule"/>
</dbReference>
<dbReference type="GO" id="GO:0006420">
    <property type="term" value="P:arginyl-tRNA aminoacylation"/>
    <property type="evidence" value="ECO:0007669"/>
    <property type="project" value="InterPro"/>
</dbReference>
<dbReference type="GO" id="GO:0006426">
    <property type="term" value="P:glycyl-tRNA aminoacylation"/>
    <property type="evidence" value="ECO:0007669"/>
    <property type="project" value="UniProtKB-UniRule"/>
</dbReference>
<dbReference type="HAMAP" id="MF_00255">
    <property type="entry name" value="Gly_tRNA_synth_beta"/>
    <property type="match status" value="1"/>
</dbReference>
<dbReference type="InterPro" id="IPR008909">
    <property type="entry name" value="DALR_anticod-bd"/>
</dbReference>
<dbReference type="InterPro" id="IPR015944">
    <property type="entry name" value="Gly-tRNA-synth_bsu"/>
</dbReference>
<dbReference type="InterPro" id="IPR006194">
    <property type="entry name" value="Gly-tRNA-synth_heterodimer"/>
</dbReference>
<dbReference type="NCBIfam" id="TIGR00211">
    <property type="entry name" value="glyS"/>
    <property type="match status" value="1"/>
</dbReference>
<dbReference type="PANTHER" id="PTHR30075:SF2">
    <property type="entry name" value="GLYCINE--TRNA LIGASE, CHLOROPLASTIC_MITOCHONDRIAL 2"/>
    <property type="match status" value="1"/>
</dbReference>
<dbReference type="PANTHER" id="PTHR30075">
    <property type="entry name" value="GLYCYL-TRNA SYNTHETASE"/>
    <property type="match status" value="1"/>
</dbReference>
<dbReference type="Pfam" id="PF05746">
    <property type="entry name" value="DALR_1"/>
    <property type="match status" value="1"/>
</dbReference>
<dbReference type="Pfam" id="PF02092">
    <property type="entry name" value="tRNA_synt_2f"/>
    <property type="match status" value="1"/>
</dbReference>
<dbReference type="PRINTS" id="PR01045">
    <property type="entry name" value="TRNASYNTHGB"/>
</dbReference>
<dbReference type="SUPFAM" id="SSF109604">
    <property type="entry name" value="HD-domain/PDEase-like"/>
    <property type="match status" value="1"/>
</dbReference>
<dbReference type="PROSITE" id="PS50861">
    <property type="entry name" value="AA_TRNA_LIGASE_II_GLYAB"/>
    <property type="match status" value="1"/>
</dbReference>
<protein>
    <recommendedName>
        <fullName evidence="1">Glycine--tRNA ligase beta subunit</fullName>
        <ecNumber evidence="1">6.1.1.14</ecNumber>
    </recommendedName>
    <alternativeName>
        <fullName evidence="1">Glycyl-tRNA synthetase beta subunit</fullName>
        <shortName evidence="1">GlyRS</shortName>
    </alternativeName>
</protein>
<accession>A8GQ64</accession>
<gene>
    <name evidence="1" type="primary">glyS</name>
    <name type="ordered locus">A1C_06580</name>
</gene>
<comment type="catalytic activity">
    <reaction evidence="1">
        <text>tRNA(Gly) + glycine + ATP = glycyl-tRNA(Gly) + AMP + diphosphate</text>
        <dbReference type="Rhea" id="RHEA:16013"/>
        <dbReference type="Rhea" id="RHEA-COMP:9664"/>
        <dbReference type="Rhea" id="RHEA-COMP:9683"/>
        <dbReference type="ChEBI" id="CHEBI:30616"/>
        <dbReference type="ChEBI" id="CHEBI:33019"/>
        <dbReference type="ChEBI" id="CHEBI:57305"/>
        <dbReference type="ChEBI" id="CHEBI:78442"/>
        <dbReference type="ChEBI" id="CHEBI:78522"/>
        <dbReference type="ChEBI" id="CHEBI:456215"/>
        <dbReference type="EC" id="6.1.1.14"/>
    </reaction>
</comment>
<comment type="subunit">
    <text evidence="1">Tetramer of two alpha and two beta subunits.</text>
</comment>
<comment type="subcellular location">
    <subcellularLocation>
        <location evidence="1">Cytoplasm</location>
    </subcellularLocation>
</comment>
<comment type="similarity">
    <text evidence="1">Belongs to the class-II aminoacyl-tRNA synthetase family.</text>
</comment>
<proteinExistence type="inferred from homology"/>